<evidence type="ECO:0000255" key="1"/>
<evidence type="ECO:0000303" key="2">
    <source>
    </source>
</evidence>
<evidence type="ECO:0000305" key="3"/>
<evidence type="ECO:0000312" key="4">
    <source>
        <dbReference type="EMBL" id="AAL85198.1"/>
    </source>
</evidence>
<evidence type="ECO:0000312" key="5">
    <source>
        <dbReference type="EMBL" id="AAO14566.1"/>
    </source>
</evidence>
<evidence type="ECO:0000312" key="6">
    <source>
        <dbReference type="EMBL" id="DAA01211.1"/>
    </source>
</evidence>
<evidence type="ECO:0000312" key="7">
    <source>
        <dbReference type="MGI" id="MGI:2681207"/>
    </source>
</evidence>
<dbReference type="EMBL" id="AF462604">
    <property type="protein sequence ID" value="AAO14566.1"/>
    <property type="molecule type" value="Genomic_DNA"/>
</dbReference>
<dbReference type="EMBL" id="AC140204">
    <property type="status" value="NOT_ANNOTATED_CDS"/>
    <property type="molecule type" value="Genomic_DNA"/>
</dbReference>
<dbReference type="EMBL" id="AF412301">
    <property type="protein sequence ID" value="AAL85198.1"/>
    <property type="molecule type" value="mRNA"/>
</dbReference>
<dbReference type="EMBL" id="BK001072">
    <property type="protein sequence ID" value="DAA01211.1"/>
    <property type="molecule type" value="Genomic_DNA"/>
</dbReference>
<dbReference type="CCDS" id="CCDS20609.1"/>
<dbReference type="RefSeq" id="NP_954605.1">
    <property type="nucleotide sequence ID" value="NM_199154.2"/>
</dbReference>
<dbReference type="SMR" id="Q7M725"/>
<dbReference type="FunCoup" id="Q7M725">
    <property type="interactions" value="146"/>
</dbReference>
<dbReference type="STRING" id="10090.ENSMUSP00000067082"/>
<dbReference type="GlyCosmos" id="Q7M725">
    <property type="glycosylation" value="3 sites, No reported glycans"/>
</dbReference>
<dbReference type="GlyGen" id="Q7M725">
    <property type="glycosylation" value="3 sites"/>
</dbReference>
<dbReference type="PhosphoSitePlus" id="Q7M725"/>
<dbReference type="PaxDb" id="10090-ENSMUSP00000067082"/>
<dbReference type="DNASU" id="387342"/>
<dbReference type="Ensembl" id="ENSMUST00000065781.5">
    <property type="protein sequence ID" value="ENSMUSP00000067082.5"/>
    <property type="gene ID" value="ENSMUSG00000053389.5"/>
</dbReference>
<dbReference type="GeneID" id="387342"/>
<dbReference type="KEGG" id="mmu:387342"/>
<dbReference type="UCSC" id="uc009eiw.1">
    <property type="organism name" value="mouse"/>
</dbReference>
<dbReference type="AGR" id="MGI:2681207"/>
<dbReference type="CTD" id="387342"/>
<dbReference type="MGI" id="MGI:2681207">
    <property type="gene designation" value="Tas2r107"/>
</dbReference>
<dbReference type="VEuPathDB" id="HostDB:ENSMUSG00000053389"/>
<dbReference type="eggNOG" id="ENOG502T3AX">
    <property type="taxonomic scope" value="Eukaryota"/>
</dbReference>
<dbReference type="GeneTree" id="ENSGT01100000263477"/>
<dbReference type="HOGENOM" id="CLU_072337_3_0_1"/>
<dbReference type="InParanoid" id="Q7M725"/>
<dbReference type="OMA" id="CVICIIT"/>
<dbReference type="OrthoDB" id="8876749at2759"/>
<dbReference type="PhylomeDB" id="Q7M725"/>
<dbReference type="TreeFam" id="TF335891"/>
<dbReference type="BioGRID-ORCS" id="387342">
    <property type="hits" value="1 hit in 75 CRISPR screens"/>
</dbReference>
<dbReference type="PRO" id="PR:Q7M725"/>
<dbReference type="Proteomes" id="UP000000589">
    <property type="component" value="Chromosome 6"/>
</dbReference>
<dbReference type="RNAct" id="Q7M725">
    <property type="molecule type" value="protein"/>
</dbReference>
<dbReference type="GO" id="GO:0016020">
    <property type="term" value="C:membrane"/>
    <property type="evidence" value="ECO:0007669"/>
    <property type="project" value="UniProtKB-SubCell"/>
</dbReference>
<dbReference type="GO" id="GO:0033038">
    <property type="term" value="F:bitter taste receptor activity"/>
    <property type="evidence" value="ECO:0007669"/>
    <property type="project" value="InterPro"/>
</dbReference>
<dbReference type="GO" id="GO:0004930">
    <property type="term" value="F:G protein-coupled receptor activity"/>
    <property type="evidence" value="ECO:0007669"/>
    <property type="project" value="UniProtKB-KW"/>
</dbReference>
<dbReference type="GO" id="GO:0001580">
    <property type="term" value="P:detection of chemical stimulus involved in sensory perception of bitter taste"/>
    <property type="evidence" value="ECO:0000304"/>
    <property type="project" value="MGI"/>
</dbReference>
<dbReference type="CDD" id="cd15021">
    <property type="entry name" value="7tm_TAS2R10"/>
    <property type="match status" value="1"/>
</dbReference>
<dbReference type="FunFam" id="1.20.1070.10:FF:000042">
    <property type="entry name" value="Taste receptor type 2 member 7"/>
    <property type="match status" value="1"/>
</dbReference>
<dbReference type="Gene3D" id="1.20.1070.10">
    <property type="entry name" value="Rhodopsin 7-helix transmembrane proteins"/>
    <property type="match status" value="1"/>
</dbReference>
<dbReference type="InterPro" id="IPR007960">
    <property type="entry name" value="TAS2R"/>
</dbReference>
<dbReference type="PANTHER" id="PTHR11394">
    <property type="entry name" value="TASTE RECEPTOR TYPE 2"/>
    <property type="match status" value="1"/>
</dbReference>
<dbReference type="PANTHER" id="PTHR11394:SF63">
    <property type="entry name" value="TASTE RECEPTOR TYPE 2 MEMBER 10"/>
    <property type="match status" value="1"/>
</dbReference>
<dbReference type="Pfam" id="PF05296">
    <property type="entry name" value="TAS2R"/>
    <property type="match status" value="1"/>
</dbReference>
<dbReference type="SUPFAM" id="SSF81321">
    <property type="entry name" value="Family A G protein-coupled receptor-like"/>
    <property type="match status" value="1"/>
</dbReference>
<accession>Q7M725</accession>
<accession>Q71QD3</accession>
<reference evidence="5" key="1">
    <citation type="journal article" date="2003" name="Immunogenetics">
        <title>Molecular genetic characterization of the distal NKC recombination hotspot and putative murine CMV resistance control locus.</title>
        <authorList>
            <person name="Scalzo A.A."/>
            <person name="Wheat R."/>
            <person name="Dubbelde C."/>
            <person name="Stone L."/>
            <person name="Clark P."/>
            <person name="Du Y."/>
            <person name="Dong N."/>
            <person name="Stoll J."/>
            <person name="Yokoyama W.M."/>
            <person name="Brown M.G."/>
        </authorList>
    </citation>
    <scope>NUCLEOTIDE SEQUENCE [GENOMIC DNA]</scope>
</reference>
<reference key="2">
    <citation type="journal article" date="2009" name="PLoS Biol.">
        <title>Lineage-specific biology revealed by a finished genome assembly of the mouse.</title>
        <authorList>
            <person name="Church D.M."/>
            <person name="Goodstadt L."/>
            <person name="Hillier L.W."/>
            <person name="Zody M.C."/>
            <person name="Goldstein S."/>
            <person name="She X."/>
            <person name="Bult C.J."/>
            <person name="Agarwala R."/>
            <person name="Cherry J.L."/>
            <person name="DiCuccio M."/>
            <person name="Hlavina W."/>
            <person name="Kapustin Y."/>
            <person name="Meric P."/>
            <person name="Maglott D."/>
            <person name="Birtle Z."/>
            <person name="Marques A.C."/>
            <person name="Graves T."/>
            <person name="Zhou S."/>
            <person name="Teague B."/>
            <person name="Potamousis K."/>
            <person name="Churas C."/>
            <person name="Place M."/>
            <person name="Herschleb J."/>
            <person name="Runnheim R."/>
            <person name="Forrest D."/>
            <person name="Amos-Landgraf J."/>
            <person name="Schwartz D.C."/>
            <person name="Cheng Z."/>
            <person name="Lindblad-Toh K."/>
            <person name="Eichler E.E."/>
            <person name="Ponting C.P."/>
        </authorList>
    </citation>
    <scope>NUCLEOTIDE SEQUENCE [LARGE SCALE GENOMIC DNA]</scope>
    <source>
        <strain>C57BL/6J</strain>
    </source>
</reference>
<reference evidence="4" key="3">
    <citation type="journal article" date="2002" name="Proc. Natl. Acad. Sci. U.S.A.">
        <title>Expression of bitter taste receptors of the T2R family in the gastrointestinal tract and enteroendocrine STC-1 cells.</title>
        <authorList>
            <person name="Wu S.V."/>
            <person name="Rozengurt N."/>
            <person name="Yang M."/>
            <person name="Young S.H."/>
            <person name="Sinnett-Smith J."/>
            <person name="Rozengurt E."/>
        </authorList>
    </citation>
    <scope>NUCLEOTIDE SEQUENCE [MRNA] OF 56-273</scope>
</reference>
<reference evidence="6" key="4">
    <citation type="journal article" date="2003" name="Mol. Biol. Evol.">
        <title>Adaptive diversification of bitter taste receptor genes in mammalian evolution.</title>
        <authorList>
            <person name="Shi P."/>
            <person name="Zhang J."/>
            <person name="Yang H."/>
            <person name="Zhang Y.-P."/>
        </authorList>
    </citation>
    <scope>IDENTIFICATION</scope>
</reference>
<name>TR107_MOUSE</name>
<gene>
    <name evidence="7" type="primary">Tas2r107</name>
    <name evidence="5" type="synonym">T2r4</name>
    <name evidence="2" type="synonym">T2r43</name>
</gene>
<proteinExistence type="evidence at transcript level"/>
<protein>
    <recommendedName>
        <fullName>Taste receptor type 2 member 107</fullName>
        <shortName>T2R107</shortName>
        <shortName>mT2R43</shortName>
    </recommendedName>
    <alternativeName>
        <fullName>STC5-1</fullName>
    </alternativeName>
    <alternativeName>
        <fullName>T2R4</fullName>
    </alternativeName>
</protein>
<keyword id="KW-0297">G-protein coupled receptor</keyword>
<keyword id="KW-0325">Glycoprotein</keyword>
<keyword id="KW-0472">Membrane</keyword>
<keyword id="KW-0675">Receptor</keyword>
<keyword id="KW-1185">Reference proteome</keyword>
<keyword id="KW-0716">Sensory transduction</keyword>
<keyword id="KW-0919">Taste</keyword>
<keyword id="KW-0807">Transducer</keyword>
<keyword id="KW-0812">Transmembrane</keyword>
<keyword id="KW-1133">Transmembrane helix</keyword>
<feature type="chain" id="PRO_0000248252" description="Taste receptor type 2 member 107">
    <location>
        <begin position="1"/>
        <end position="308"/>
    </location>
</feature>
<feature type="topological domain" description="Extracellular" evidence="1">
    <location>
        <begin position="1"/>
        <end position="7"/>
    </location>
</feature>
<feature type="transmembrane region" description="Helical; Name=1" evidence="1">
    <location>
        <begin position="8"/>
        <end position="28"/>
    </location>
</feature>
<feature type="topological domain" description="Cytoplasmic" evidence="1">
    <location>
        <begin position="29"/>
        <end position="43"/>
    </location>
</feature>
<feature type="transmembrane region" description="Helical; Name=2" evidence="1">
    <location>
        <begin position="44"/>
        <end position="64"/>
    </location>
</feature>
<feature type="topological domain" description="Extracellular" evidence="1">
    <location>
        <begin position="65"/>
        <end position="87"/>
    </location>
</feature>
<feature type="transmembrane region" description="Helical; Name=3" evidence="1">
    <location>
        <begin position="88"/>
        <end position="108"/>
    </location>
</feature>
<feature type="topological domain" description="Cytoplasmic" evidence="1">
    <location>
        <begin position="109"/>
        <end position="125"/>
    </location>
</feature>
<feature type="transmembrane region" description="Helical; Name=4" evidence="1">
    <location>
        <begin position="126"/>
        <end position="146"/>
    </location>
</feature>
<feature type="topological domain" description="Extracellular" evidence="1">
    <location>
        <begin position="147"/>
        <end position="180"/>
    </location>
</feature>
<feature type="transmembrane region" description="Helical; Name=5" evidence="1">
    <location>
        <begin position="181"/>
        <end position="201"/>
    </location>
</feature>
<feature type="topological domain" description="Cytoplasmic" evidence="1">
    <location>
        <begin position="202"/>
        <end position="232"/>
    </location>
</feature>
<feature type="transmembrane region" description="Helical; Name=6" evidence="1">
    <location>
        <begin position="233"/>
        <end position="253"/>
    </location>
</feature>
<feature type="topological domain" description="Extracellular" evidence="1">
    <location>
        <begin position="254"/>
        <end position="258"/>
    </location>
</feature>
<feature type="transmembrane region" description="Helical; Name=7" evidence="1">
    <location>
        <begin position="259"/>
        <end position="279"/>
    </location>
</feature>
<feature type="topological domain" description="Cytoplasmic" evidence="1">
    <location>
        <begin position="280"/>
        <end position="308"/>
    </location>
</feature>
<feature type="glycosylation site" description="N-linked (GlcNAc...) asparagine" evidence="1">
    <location>
        <position position="80"/>
    </location>
</feature>
<feature type="glycosylation site" description="N-linked (GlcNAc...) asparagine" evidence="1">
    <location>
        <position position="161"/>
    </location>
</feature>
<feature type="glycosylation site" description="N-linked (GlcNAc...) asparagine" evidence="1">
    <location>
        <position position="175"/>
    </location>
</feature>
<feature type="sequence conflict" description="In Ref. 3; AAL85198." evidence="3" ref="3">
    <original>I</original>
    <variation>L</variation>
    <location>
        <position position="63"/>
    </location>
</feature>
<feature type="sequence conflict" description="In Ref. 3; AAL85198." evidence="3" ref="3">
    <original>C</original>
    <variation>R</variation>
    <location>
        <position position="144"/>
    </location>
</feature>
<feature type="sequence conflict" description="In Ref. 3; AAL85198." evidence="3" ref="3">
    <original>F</original>
    <variation>L</variation>
    <location>
        <position position="233"/>
    </location>
</feature>
<feature type="sequence conflict" description="In Ref. 3; AAL85198." evidence="3" ref="3">
    <original>L</original>
    <variation>R</variation>
    <location>
        <position position="239"/>
    </location>
</feature>
<feature type="sequence conflict" description="In Ref. 3; AAL85198." evidence="3" ref="3">
    <original>F</original>
    <variation>L</variation>
    <location>
        <position position="260"/>
    </location>
</feature>
<organism>
    <name type="scientific">Mus musculus</name>
    <name type="common">Mouse</name>
    <dbReference type="NCBI Taxonomy" id="10090"/>
    <lineage>
        <taxon>Eukaryota</taxon>
        <taxon>Metazoa</taxon>
        <taxon>Chordata</taxon>
        <taxon>Craniata</taxon>
        <taxon>Vertebrata</taxon>
        <taxon>Euteleostomi</taxon>
        <taxon>Mammalia</taxon>
        <taxon>Eutheria</taxon>
        <taxon>Euarchontoglires</taxon>
        <taxon>Glires</taxon>
        <taxon>Rodentia</taxon>
        <taxon>Myomorpha</taxon>
        <taxon>Muroidea</taxon>
        <taxon>Muridae</taxon>
        <taxon>Murinae</taxon>
        <taxon>Mus</taxon>
        <taxon>Mus</taxon>
    </lineage>
</organism>
<sequence length="308" mass="35427">MLNSAEGILLCVVTSEAVLGVLGDTYIALFNCMDYAKNKKLSKIGFILIGLAISRIGVVWIIILQGYIQVFFPHMLTSGNITEYITYIWVFLNHLSVWFVTNLNILYFLKIANFSNSVFLWLKRRVNAVFIFLSGCLLTSWLLCFPQMTKILQNSKMHQRNTSWVHQRKNYFLINQSVTNLGIFFFIIVSLITCFLLIVFLWRHVRQMHSDVSGFRDHSTKVHVKAMKFLISFMVFFILHFVGLSIEVLCFILPQNKLLFITGLTATCLYPCGHSIIVILGNKQLKQASLKALQQLKCCETKGNFRVK</sequence>
<comment type="function">
    <text evidence="3">Putative taste receptor which may play a role in the perception of bitterness.</text>
</comment>
<comment type="subcellular location">
    <subcellularLocation>
        <location evidence="3">Membrane</location>
        <topology evidence="3">Multi-pass membrane protein</topology>
    </subcellularLocation>
</comment>
<comment type="miscellaneous">
    <text evidence="3">Several bitter taste receptors with distinct ligand specificities are expressed in a single taste receptor cell.</text>
</comment>
<comment type="similarity">
    <text evidence="1">Belongs to the G-protein coupled receptor T2R family.</text>
</comment>